<sequence>MAAKDVKFGDSARSKMVAGVNILADAVKVTLGPKGRNVVLDRSFGAPTITKDGVSVAKEIELKDKFENMGAQMVKEVASKTSDVAGDGTTTATVLAQAIVQEGMKFVAAGMNPMDLKRGIDKAVVSLVGEIAKIAKPCATSKEIAQVGSISANSDSDIGEIIANAMEKVGKEGVITVEDGKSLNNELDVVEGMQFDRGYLSPYFINNQDKQIAALDNPFILLFDKKISNIRDLLPVLEQVAKSGRPLLIIAEDVEGEALATLVVNTIRGILKVVAVKAPGFGDRRKAMLTDIAVLTGGEVIAEEVGLTLEKATLDQLGQAKRVEVGKENTTIIDGAGEAATIQARVGEIRKQIEEATSDYDREKLQERVAKLAGGVAVIKVGAATEVEMKEKKARVEDALHATRAAVEEGVVPGGGVALLRARATLENLKTDNAEQEAGVKIVLRAIEAPLRQIVKNAGDEPSVVVNKVLEGKGNFGYNAASGEYGDMLEMGVLDPAKVTRSALQHAASVAGLMLTTDCMIAELPEDKPAAGMPDMGGMGGMGGMM</sequence>
<gene>
    <name evidence="1" type="primary">groEL2</name>
    <name evidence="1" type="synonym">groL2</name>
    <name type="ordered locus">CV_4014</name>
</gene>
<keyword id="KW-0067">ATP-binding</keyword>
<keyword id="KW-0143">Chaperone</keyword>
<keyword id="KW-0963">Cytoplasm</keyword>
<keyword id="KW-0413">Isomerase</keyword>
<keyword id="KW-0547">Nucleotide-binding</keyword>
<keyword id="KW-1185">Reference proteome</keyword>
<organism>
    <name type="scientific">Chromobacterium violaceum (strain ATCC 12472 / DSM 30191 / JCM 1249 / CCUG 213 / NBRC 12614 / NCIMB 9131 / NCTC 9757 / MK)</name>
    <dbReference type="NCBI Taxonomy" id="243365"/>
    <lineage>
        <taxon>Bacteria</taxon>
        <taxon>Pseudomonadati</taxon>
        <taxon>Pseudomonadota</taxon>
        <taxon>Betaproteobacteria</taxon>
        <taxon>Neisseriales</taxon>
        <taxon>Chromobacteriaceae</taxon>
        <taxon>Chromobacterium</taxon>
    </lineage>
</organism>
<name>CH602_CHRVO</name>
<comment type="function">
    <text evidence="1">Together with its co-chaperonin GroES, plays an essential role in assisting protein folding. The GroEL-GroES system forms a nano-cage that allows encapsulation of the non-native substrate proteins and provides a physical environment optimized to promote and accelerate protein folding.</text>
</comment>
<comment type="catalytic activity">
    <reaction evidence="1">
        <text>ATP + H2O + a folded polypeptide = ADP + phosphate + an unfolded polypeptide.</text>
        <dbReference type="EC" id="5.6.1.7"/>
    </reaction>
</comment>
<comment type="subunit">
    <text evidence="1">Forms a cylinder of 14 subunits composed of two heptameric rings stacked back-to-back. Interacts with the co-chaperonin GroES.</text>
</comment>
<comment type="subcellular location">
    <subcellularLocation>
        <location evidence="1">Cytoplasm</location>
    </subcellularLocation>
</comment>
<comment type="similarity">
    <text evidence="1">Belongs to the chaperonin (HSP60) family.</text>
</comment>
<dbReference type="EC" id="5.6.1.7" evidence="1"/>
<dbReference type="EMBL" id="AE016825">
    <property type="protein sequence ID" value="AAQ61676.1"/>
    <property type="molecule type" value="Genomic_DNA"/>
</dbReference>
<dbReference type="RefSeq" id="WP_011137561.1">
    <property type="nucleotide sequence ID" value="NC_005085.1"/>
</dbReference>
<dbReference type="SMR" id="Q7NQX1"/>
<dbReference type="STRING" id="243365.CV_4014"/>
<dbReference type="GeneID" id="66366533"/>
<dbReference type="KEGG" id="cvi:CV_4014"/>
<dbReference type="eggNOG" id="COG0459">
    <property type="taxonomic scope" value="Bacteria"/>
</dbReference>
<dbReference type="HOGENOM" id="CLU_016503_3_0_4"/>
<dbReference type="OrthoDB" id="9766614at2"/>
<dbReference type="Proteomes" id="UP000001424">
    <property type="component" value="Chromosome"/>
</dbReference>
<dbReference type="GO" id="GO:0005737">
    <property type="term" value="C:cytoplasm"/>
    <property type="evidence" value="ECO:0007669"/>
    <property type="project" value="UniProtKB-SubCell"/>
</dbReference>
<dbReference type="GO" id="GO:0005524">
    <property type="term" value="F:ATP binding"/>
    <property type="evidence" value="ECO:0007669"/>
    <property type="project" value="UniProtKB-UniRule"/>
</dbReference>
<dbReference type="GO" id="GO:0140662">
    <property type="term" value="F:ATP-dependent protein folding chaperone"/>
    <property type="evidence" value="ECO:0007669"/>
    <property type="project" value="InterPro"/>
</dbReference>
<dbReference type="GO" id="GO:0016853">
    <property type="term" value="F:isomerase activity"/>
    <property type="evidence" value="ECO:0007669"/>
    <property type="project" value="UniProtKB-KW"/>
</dbReference>
<dbReference type="GO" id="GO:0051082">
    <property type="term" value="F:unfolded protein binding"/>
    <property type="evidence" value="ECO:0007669"/>
    <property type="project" value="UniProtKB-UniRule"/>
</dbReference>
<dbReference type="GO" id="GO:0042026">
    <property type="term" value="P:protein refolding"/>
    <property type="evidence" value="ECO:0007669"/>
    <property type="project" value="UniProtKB-UniRule"/>
</dbReference>
<dbReference type="CDD" id="cd03344">
    <property type="entry name" value="GroEL"/>
    <property type="match status" value="1"/>
</dbReference>
<dbReference type="FunFam" id="1.10.560.10:FF:000001">
    <property type="entry name" value="60 kDa chaperonin"/>
    <property type="match status" value="1"/>
</dbReference>
<dbReference type="FunFam" id="3.50.7.10:FF:000001">
    <property type="entry name" value="60 kDa chaperonin"/>
    <property type="match status" value="1"/>
</dbReference>
<dbReference type="Gene3D" id="3.50.7.10">
    <property type="entry name" value="GroEL"/>
    <property type="match status" value="1"/>
</dbReference>
<dbReference type="Gene3D" id="1.10.560.10">
    <property type="entry name" value="GroEL-like equatorial domain"/>
    <property type="match status" value="1"/>
</dbReference>
<dbReference type="Gene3D" id="3.30.260.10">
    <property type="entry name" value="TCP-1-like chaperonin intermediate domain"/>
    <property type="match status" value="1"/>
</dbReference>
<dbReference type="HAMAP" id="MF_00600">
    <property type="entry name" value="CH60"/>
    <property type="match status" value="1"/>
</dbReference>
<dbReference type="InterPro" id="IPR018370">
    <property type="entry name" value="Chaperonin_Cpn60_CS"/>
</dbReference>
<dbReference type="InterPro" id="IPR001844">
    <property type="entry name" value="Cpn60/GroEL"/>
</dbReference>
<dbReference type="InterPro" id="IPR002423">
    <property type="entry name" value="Cpn60/GroEL/TCP-1"/>
</dbReference>
<dbReference type="InterPro" id="IPR027409">
    <property type="entry name" value="GroEL-like_apical_dom_sf"/>
</dbReference>
<dbReference type="InterPro" id="IPR027413">
    <property type="entry name" value="GROEL-like_equatorial_sf"/>
</dbReference>
<dbReference type="InterPro" id="IPR027410">
    <property type="entry name" value="TCP-1-like_intermed_sf"/>
</dbReference>
<dbReference type="NCBIfam" id="TIGR02348">
    <property type="entry name" value="GroEL"/>
    <property type="match status" value="1"/>
</dbReference>
<dbReference type="NCBIfam" id="NF000592">
    <property type="entry name" value="PRK00013.1"/>
    <property type="match status" value="1"/>
</dbReference>
<dbReference type="NCBIfam" id="NF009487">
    <property type="entry name" value="PRK12849.1"/>
    <property type="match status" value="1"/>
</dbReference>
<dbReference type="NCBIfam" id="NF009488">
    <property type="entry name" value="PRK12850.1"/>
    <property type="match status" value="1"/>
</dbReference>
<dbReference type="NCBIfam" id="NF009489">
    <property type="entry name" value="PRK12851.1"/>
    <property type="match status" value="1"/>
</dbReference>
<dbReference type="PANTHER" id="PTHR45633">
    <property type="entry name" value="60 KDA HEAT SHOCK PROTEIN, MITOCHONDRIAL"/>
    <property type="match status" value="1"/>
</dbReference>
<dbReference type="Pfam" id="PF00118">
    <property type="entry name" value="Cpn60_TCP1"/>
    <property type="match status" value="1"/>
</dbReference>
<dbReference type="PRINTS" id="PR00298">
    <property type="entry name" value="CHAPERONIN60"/>
</dbReference>
<dbReference type="SUPFAM" id="SSF52029">
    <property type="entry name" value="GroEL apical domain-like"/>
    <property type="match status" value="1"/>
</dbReference>
<dbReference type="SUPFAM" id="SSF48592">
    <property type="entry name" value="GroEL equatorial domain-like"/>
    <property type="match status" value="1"/>
</dbReference>
<dbReference type="SUPFAM" id="SSF54849">
    <property type="entry name" value="GroEL-intermediate domain like"/>
    <property type="match status" value="1"/>
</dbReference>
<dbReference type="PROSITE" id="PS00296">
    <property type="entry name" value="CHAPERONINS_CPN60"/>
    <property type="match status" value="1"/>
</dbReference>
<protein>
    <recommendedName>
        <fullName evidence="1">Chaperonin GroEL 2</fullName>
        <ecNumber evidence="1">5.6.1.7</ecNumber>
    </recommendedName>
    <alternativeName>
        <fullName evidence="1">60 kDa chaperonin 2</fullName>
    </alternativeName>
    <alternativeName>
        <fullName evidence="1">Chaperonin-60 2</fullName>
        <shortName evidence="1">Cpn60 2</shortName>
    </alternativeName>
</protein>
<proteinExistence type="inferred from homology"/>
<feature type="chain" id="PRO_0000063337" description="Chaperonin GroEL 2">
    <location>
        <begin position="1"/>
        <end position="546"/>
    </location>
</feature>
<feature type="binding site" evidence="1">
    <location>
        <begin position="30"/>
        <end position="33"/>
    </location>
    <ligand>
        <name>ATP</name>
        <dbReference type="ChEBI" id="CHEBI:30616"/>
    </ligand>
</feature>
<feature type="binding site" evidence="1">
    <location>
        <position position="51"/>
    </location>
    <ligand>
        <name>ATP</name>
        <dbReference type="ChEBI" id="CHEBI:30616"/>
    </ligand>
</feature>
<feature type="binding site" evidence="1">
    <location>
        <begin position="87"/>
        <end position="91"/>
    </location>
    <ligand>
        <name>ATP</name>
        <dbReference type="ChEBI" id="CHEBI:30616"/>
    </ligand>
</feature>
<feature type="binding site" evidence="1">
    <location>
        <position position="415"/>
    </location>
    <ligand>
        <name>ATP</name>
        <dbReference type="ChEBI" id="CHEBI:30616"/>
    </ligand>
</feature>
<feature type="binding site" evidence="1">
    <location>
        <begin position="479"/>
        <end position="481"/>
    </location>
    <ligand>
        <name>ATP</name>
        <dbReference type="ChEBI" id="CHEBI:30616"/>
    </ligand>
</feature>
<feature type="binding site" evidence="1">
    <location>
        <position position="495"/>
    </location>
    <ligand>
        <name>ATP</name>
        <dbReference type="ChEBI" id="CHEBI:30616"/>
    </ligand>
</feature>
<reference key="1">
    <citation type="journal article" date="2003" name="Proc. Natl. Acad. Sci. U.S.A.">
        <title>The complete genome sequence of Chromobacterium violaceum reveals remarkable and exploitable bacterial adaptability.</title>
        <authorList>
            <person name="Vasconcelos A.T.R."/>
            <person name="de Almeida D.F."/>
            <person name="Hungria M."/>
            <person name="Guimaraes C.T."/>
            <person name="Antonio R.V."/>
            <person name="Almeida F.C."/>
            <person name="de Almeida L.G.P."/>
            <person name="de Almeida R."/>
            <person name="Alves-Gomes J.A."/>
            <person name="Andrade E.M."/>
            <person name="Araripe J."/>
            <person name="de Araujo M.F.F."/>
            <person name="Astolfi-Filho S."/>
            <person name="Azevedo V."/>
            <person name="Baptista A.J."/>
            <person name="Bataus L.A.M."/>
            <person name="Batista J.S."/>
            <person name="Belo A."/>
            <person name="van den Berg C."/>
            <person name="Bogo M."/>
            <person name="Bonatto S."/>
            <person name="Bordignon J."/>
            <person name="Brigido M.M."/>
            <person name="Brito C.A."/>
            <person name="Brocchi M."/>
            <person name="Burity H.A."/>
            <person name="Camargo A.A."/>
            <person name="Cardoso D.D.P."/>
            <person name="Carneiro N.P."/>
            <person name="Carraro D.M."/>
            <person name="Carvalho C.M.B."/>
            <person name="Cascardo J.C.M."/>
            <person name="Cavada B.S."/>
            <person name="Chueire L.M.O."/>
            <person name="Creczynski-Pasa T.B."/>
            <person name="Cunha-Junior N.C."/>
            <person name="Fagundes N."/>
            <person name="Falcao C.L."/>
            <person name="Fantinatti F."/>
            <person name="Farias I.P."/>
            <person name="Felipe M.S.S."/>
            <person name="Ferrari L.P."/>
            <person name="Ferro J.A."/>
            <person name="Ferro M.I.T."/>
            <person name="Franco G.R."/>
            <person name="Freitas N.S.A."/>
            <person name="Furlan L.R."/>
            <person name="Gazzinelli R.T."/>
            <person name="Gomes E.A."/>
            <person name="Goncalves P.R."/>
            <person name="Grangeiro T.B."/>
            <person name="Grattapaglia D."/>
            <person name="Grisard E.C."/>
            <person name="Hanna E.S."/>
            <person name="Jardim S.N."/>
            <person name="Laurino J."/>
            <person name="Leoi L.C.T."/>
            <person name="Lima L.F.A."/>
            <person name="Loureiro M.F."/>
            <person name="Lyra M.C.C.P."/>
            <person name="Madeira H.M.F."/>
            <person name="Manfio G.P."/>
            <person name="Maranhao A.Q."/>
            <person name="Martins W.S."/>
            <person name="di Mauro S.M.Z."/>
            <person name="de Medeiros S.R.B."/>
            <person name="Meissner R.V."/>
            <person name="Moreira M.A.M."/>
            <person name="Nascimento F.F."/>
            <person name="Nicolas M.F."/>
            <person name="Oliveira J.G."/>
            <person name="Oliveira S.C."/>
            <person name="Paixao R.F.C."/>
            <person name="Parente J.A."/>
            <person name="Pedrosa F.O."/>
            <person name="Pena S.D.J."/>
            <person name="Pereira J.O."/>
            <person name="Pereira M."/>
            <person name="Pinto L.S.R.C."/>
            <person name="Pinto L.S."/>
            <person name="Porto J.I.R."/>
            <person name="Potrich D.P."/>
            <person name="Ramalho-Neto C.E."/>
            <person name="Reis A.M.M."/>
            <person name="Rigo L.U."/>
            <person name="Rondinelli E."/>
            <person name="Santos E.B.P."/>
            <person name="Santos F.R."/>
            <person name="Schneider M.P.C."/>
            <person name="Seuanez H.N."/>
            <person name="Silva A.M.R."/>
            <person name="da Silva A.L.C."/>
            <person name="Silva D.W."/>
            <person name="Silva R."/>
            <person name="Simoes I.C."/>
            <person name="Simon D."/>
            <person name="Soares C.M.A."/>
            <person name="Soares R.B.A."/>
            <person name="Souza E.M."/>
            <person name="Souza K.R.L."/>
            <person name="Souza R.C."/>
            <person name="Steffens M.B.R."/>
            <person name="Steindel M."/>
            <person name="Teixeira S.R."/>
            <person name="Urmenyi T."/>
            <person name="Vettore A."/>
            <person name="Wassem R."/>
            <person name="Zaha A."/>
            <person name="Simpson A.J.G."/>
        </authorList>
    </citation>
    <scope>NUCLEOTIDE SEQUENCE [LARGE SCALE GENOMIC DNA]</scope>
    <source>
        <strain>ATCC 12472 / DSM 30191 / JCM 1249 / CCUG 213 / NBRC 12614 / NCIMB 9131 / NCTC 9757 / MK</strain>
    </source>
</reference>
<accession>Q7NQX1</accession>
<evidence type="ECO:0000255" key="1">
    <source>
        <dbReference type="HAMAP-Rule" id="MF_00600"/>
    </source>
</evidence>